<feature type="chain" id="PRO_0000229684" description="NAD kinase">
    <location>
        <begin position="1"/>
        <end position="255"/>
    </location>
</feature>
<feature type="active site" description="Proton acceptor" evidence="1">
    <location>
        <position position="44"/>
    </location>
</feature>
<feature type="binding site" evidence="1">
    <location>
        <begin position="44"/>
        <end position="45"/>
    </location>
    <ligand>
        <name>NAD(+)</name>
        <dbReference type="ChEBI" id="CHEBI:57540"/>
    </ligand>
</feature>
<feature type="binding site" evidence="1">
    <location>
        <position position="49"/>
    </location>
    <ligand>
        <name>NAD(+)</name>
        <dbReference type="ChEBI" id="CHEBI:57540"/>
    </ligand>
</feature>
<feature type="binding site" evidence="1">
    <location>
        <begin position="114"/>
        <end position="115"/>
    </location>
    <ligand>
        <name>NAD(+)</name>
        <dbReference type="ChEBI" id="CHEBI:57540"/>
    </ligand>
</feature>
<feature type="binding site" evidence="1">
    <location>
        <position position="144"/>
    </location>
    <ligand>
        <name>NAD(+)</name>
        <dbReference type="ChEBI" id="CHEBI:57540"/>
    </ligand>
</feature>
<feature type="binding site" evidence="1">
    <location>
        <position position="152"/>
    </location>
    <ligand>
        <name>NAD(+)</name>
        <dbReference type="ChEBI" id="CHEBI:57540"/>
    </ligand>
</feature>
<feature type="binding site" evidence="1">
    <location>
        <begin position="155"/>
        <end position="160"/>
    </location>
    <ligand>
        <name>NAD(+)</name>
        <dbReference type="ChEBI" id="CHEBI:57540"/>
    </ligand>
</feature>
<feature type="binding site" evidence="1">
    <location>
        <position position="216"/>
    </location>
    <ligand>
        <name>NAD(+)</name>
        <dbReference type="ChEBI" id="CHEBI:57540"/>
    </ligand>
</feature>
<name>NADK_RICTY</name>
<reference key="1">
    <citation type="journal article" date="2004" name="J. Bacteriol.">
        <title>Complete genome sequence of Rickettsia typhi and comparison with sequences of other Rickettsiae.</title>
        <authorList>
            <person name="McLeod M.P."/>
            <person name="Qin X."/>
            <person name="Karpathy S.E."/>
            <person name="Gioia J."/>
            <person name="Highlander S.K."/>
            <person name="Fox G.E."/>
            <person name="McNeill T.Z."/>
            <person name="Jiang H."/>
            <person name="Muzny D."/>
            <person name="Jacob L.S."/>
            <person name="Hawes A.C."/>
            <person name="Sodergren E."/>
            <person name="Gill R."/>
            <person name="Hume J."/>
            <person name="Morgan M."/>
            <person name="Fan G."/>
            <person name="Amin A.G."/>
            <person name="Gibbs R.A."/>
            <person name="Hong C."/>
            <person name="Yu X.-J."/>
            <person name="Walker D.H."/>
            <person name="Weinstock G.M."/>
        </authorList>
    </citation>
    <scope>NUCLEOTIDE SEQUENCE [LARGE SCALE GENOMIC DNA]</scope>
    <source>
        <strain>ATCC VR-144 / Wilmington</strain>
    </source>
</reference>
<accession>Q68WT8</accession>
<gene>
    <name evidence="1" type="primary">nadK</name>
    <name type="ordered locus">RT0427</name>
</gene>
<keyword id="KW-0067">ATP-binding</keyword>
<keyword id="KW-0963">Cytoplasm</keyword>
<keyword id="KW-0418">Kinase</keyword>
<keyword id="KW-0520">NAD</keyword>
<keyword id="KW-0521">NADP</keyword>
<keyword id="KW-0547">Nucleotide-binding</keyword>
<keyword id="KW-0808">Transferase</keyword>
<dbReference type="EC" id="2.7.1.23" evidence="1"/>
<dbReference type="EMBL" id="AE017197">
    <property type="protein sequence ID" value="AAU03904.1"/>
    <property type="molecule type" value="Genomic_DNA"/>
</dbReference>
<dbReference type="RefSeq" id="WP_011190888.1">
    <property type="nucleotide sequence ID" value="NC_006142.1"/>
</dbReference>
<dbReference type="SMR" id="Q68WT8"/>
<dbReference type="KEGG" id="rty:RT0427"/>
<dbReference type="eggNOG" id="COG0061">
    <property type="taxonomic scope" value="Bacteria"/>
</dbReference>
<dbReference type="HOGENOM" id="CLU_073319_0_0_5"/>
<dbReference type="OrthoDB" id="9774737at2"/>
<dbReference type="Proteomes" id="UP000000604">
    <property type="component" value="Chromosome"/>
</dbReference>
<dbReference type="GO" id="GO:0005737">
    <property type="term" value="C:cytoplasm"/>
    <property type="evidence" value="ECO:0007669"/>
    <property type="project" value="UniProtKB-SubCell"/>
</dbReference>
<dbReference type="GO" id="GO:0005524">
    <property type="term" value="F:ATP binding"/>
    <property type="evidence" value="ECO:0007669"/>
    <property type="project" value="UniProtKB-KW"/>
</dbReference>
<dbReference type="GO" id="GO:0046872">
    <property type="term" value="F:metal ion binding"/>
    <property type="evidence" value="ECO:0007669"/>
    <property type="project" value="UniProtKB-UniRule"/>
</dbReference>
<dbReference type="GO" id="GO:0051287">
    <property type="term" value="F:NAD binding"/>
    <property type="evidence" value="ECO:0007669"/>
    <property type="project" value="UniProtKB-ARBA"/>
</dbReference>
<dbReference type="GO" id="GO:0003951">
    <property type="term" value="F:NAD+ kinase activity"/>
    <property type="evidence" value="ECO:0007669"/>
    <property type="project" value="UniProtKB-UniRule"/>
</dbReference>
<dbReference type="GO" id="GO:0019674">
    <property type="term" value="P:NAD metabolic process"/>
    <property type="evidence" value="ECO:0007669"/>
    <property type="project" value="InterPro"/>
</dbReference>
<dbReference type="GO" id="GO:0006741">
    <property type="term" value="P:NADP biosynthetic process"/>
    <property type="evidence" value="ECO:0007669"/>
    <property type="project" value="UniProtKB-UniRule"/>
</dbReference>
<dbReference type="Gene3D" id="3.40.50.10330">
    <property type="entry name" value="Probable inorganic polyphosphate/atp-NAD kinase, domain 1"/>
    <property type="match status" value="1"/>
</dbReference>
<dbReference type="Gene3D" id="2.60.200.30">
    <property type="entry name" value="Probable inorganic polyphosphate/atp-NAD kinase, domain 2"/>
    <property type="match status" value="1"/>
</dbReference>
<dbReference type="HAMAP" id="MF_00361">
    <property type="entry name" value="NAD_kinase"/>
    <property type="match status" value="1"/>
</dbReference>
<dbReference type="InterPro" id="IPR017438">
    <property type="entry name" value="ATP-NAD_kinase_N"/>
</dbReference>
<dbReference type="InterPro" id="IPR017437">
    <property type="entry name" value="ATP-NAD_kinase_PpnK-typ_C"/>
</dbReference>
<dbReference type="InterPro" id="IPR016064">
    <property type="entry name" value="NAD/diacylglycerol_kinase_sf"/>
</dbReference>
<dbReference type="InterPro" id="IPR002504">
    <property type="entry name" value="NADK"/>
</dbReference>
<dbReference type="NCBIfam" id="NF003406">
    <property type="entry name" value="PRK04761.1"/>
    <property type="match status" value="1"/>
</dbReference>
<dbReference type="PANTHER" id="PTHR20275">
    <property type="entry name" value="NAD KINASE"/>
    <property type="match status" value="1"/>
</dbReference>
<dbReference type="PANTHER" id="PTHR20275:SF0">
    <property type="entry name" value="NAD KINASE"/>
    <property type="match status" value="1"/>
</dbReference>
<dbReference type="Pfam" id="PF01513">
    <property type="entry name" value="NAD_kinase"/>
    <property type="match status" value="1"/>
</dbReference>
<dbReference type="Pfam" id="PF20143">
    <property type="entry name" value="NAD_kinase_C"/>
    <property type="match status" value="1"/>
</dbReference>
<dbReference type="SUPFAM" id="SSF111331">
    <property type="entry name" value="NAD kinase/diacylglycerol kinase-like"/>
    <property type="match status" value="1"/>
</dbReference>
<evidence type="ECO:0000255" key="1">
    <source>
        <dbReference type="HAMAP-Rule" id="MF_00361"/>
    </source>
</evidence>
<protein>
    <recommendedName>
        <fullName evidence="1">NAD kinase</fullName>
        <ecNumber evidence="1">2.7.1.23</ecNumber>
    </recommendedName>
    <alternativeName>
        <fullName evidence="1">ATP-dependent NAD kinase</fullName>
    </alternativeName>
</protein>
<organism>
    <name type="scientific">Rickettsia typhi (strain ATCC VR-144 / Wilmington)</name>
    <dbReference type="NCBI Taxonomy" id="257363"/>
    <lineage>
        <taxon>Bacteria</taxon>
        <taxon>Pseudomonadati</taxon>
        <taxon>Pseudomonadota</taxon>
        <taxon>Alphaproteobacteria</taxon>
        <taxon>Rickettsiales</taxon>
        <taxon>Rickettsiaceae</taxon>
        <taxon>Rickettsieae</taxon>
        <taxon>Rickettsia</taxon>
        <taxon>typhus group</taxon>
    </lineage>
</organism>
<comment type="function">
    <text evidence="1">Involved in the regulation of the intracellular balance of NAD and NADP, and is a key enzyme in the biosynthesis of NADP. Catalyzes specifically the phosphorylation on 2'-hydroxyl of the adenosine moiety of NAD to yield NADP.</text>
</comment>
<comment type="catalytic activity">
    <reaction evidence="1">
        <text>NAD(+) + ATP = ADP + NADP(+) + H(+)</text>
        <dbReference type="Rhea" id="RHEA:18629"/>
        <dbReference type="ChEBI" id="CHEBI:15378"/>
        <dbReference type="ChEBI" id="CHEBI:30616"/>
        <dbReference type="ChEBI" id="CHEBI:57540"/>
        <dbReference type="ChEBI" id="CHEBI:58349"/>
        <dbReference type="ChEBI" id="CHEBI:456216"/>
        <dbReference type="EC" id="2.7.1.23"/>
    </reaction>
</comment>
<comment type="cofactor">
    <cofactor evidence="1">
        <name>a divalent metal cation</name>
        <dbReference type="ChEBI" id="CHEBI:60240"/>
    </cofactor>
</comment>
<comment type="subcellular location">
    <subcellularLocation>
        <location evidence="1">Cytoplasm</location>
    </subcellularLocation>
</comment>
<comment type="similarity">
    <text evidence="1">Belongs to the NAD kinase family.</text>
</comment>
<proteinExistence type="inferred from homology"/>
<sequence>MNTNKIALIYNKNSKHLAIIEEIKKLFNYCKIEDAEVIIIIGGDGELLHNIHRYMHLNIPFYGLNLGSLGFLMNPLDTKKLLQNIYESTVSVLNPLLMQAEDTNGQIYKALAINEVSIFRKTNQAAKFRIDINGVERMSELVADGALVATPAGSSAYNLSAGGPILPLASNMLCLTPICSFRPRRWHGALLLSSATIKFEILNITKRPVNATADFQEFNNITRVTVKSTKDQHIKLLFNKNHTLEDRIIKEQFGE</sequence>